<name>PLSB_ACTPJ</name>
<reference key="1">
    <citation type="journal article" date="2008" name="PLoS ONE">
        <title>Genome biology of Actinobacillus pleuropneumoniae JL03, an isolate of serotype 3 prevalent in China.</title>
        <authorList>
            <person name="Xu Z."/>
            <person name="Zhou Y."/>
            <person name="Li L."/>
            <person name="Zhou R."/>
            <person name="Xiao S."/>
            <person name="Wan Y."/>
            <person name="Zhang S."/>
            <person name="Wang K."/>
            <person name="Li W."/>
            <person name="Li L."/>
            <person name="Jin H."/>
            <person name="Kang M."/>
            <person name="Dalai B."/>
            <person name="Li T."/>
            <person name="Liu L."/>
            <person name="Cheng Y."/>
            <person name="Zhang L."/>
            <person name="Xu T."/>
            <person name="Zheng H."/>
            <person name="Pu S."/>
            <person name="Wang B."/>
            <person name="Gu W."/>
            <person name="Zhang X.L."/>
            <person name="Zhu G.-F."/>
            <person name="Wang S."/>
            <person name="Zhao G.-P."/>
            <person name="Chen H."/>
        </authorList>
    </citation>
    <scope>NUCLEOTIDE SEQUENCE [LARGE SCALE GENOMIC DNA]</scope>
    <source>
        <strain>JL03</strain>
    </source>
</reference>
<organism>
    <name type="scientific">Actinobacillus pleuropneumoniae serotype 3 (strain JL03)</name>
    <dbReference type="NCBI Taxonomy" id="434271"/>
    <lineage>
        <taxon>Bacteria</taxon>
        <taxon>Pseudomonadati</taxon>
        <taxon>Pseudomonadota</taxon>
        <taxon>Gammaproteobacteria</taxon>
        <taxon>Pasteurellales</taxon>
        <taxon>Pasteurellaceae</taxon>
        <taxon>Actinobacillus</taxon>
    </lineage>
</organism>
<protein>
    <recommendedName>
        <fullName evidence="1">Glycerol-3-phosphate acyltransferase</fullName>
        <shortName evidence="1">GPAT</shortName>
        <ecNumber evidence="1">2.3.1.15</ecNumber>
    </recommendedName>
</protein>
<gene>
    <name evidence="1" type="primary">plsB</name>
    <name type="ordered locus">APJL_1126</name>
</gene>
<proteinExistence type="inferred from homology"/>
<comment type="catalytic activity">
    <reaction evidence="1">
        <text>sn-glycerol 3-phosphate + an acyl-CoA = a 1-acyl-sn-glycero-3-phosphate + CoA</text>
        <dbReference type="Rhea" id="RHEA:15325"/>
        <dbReference type="ChEBI" id="CHEBI:57287"/>
        <dbReference type="ChEBI" id="CHEBI:57597"/>
        <dbReference type="ChEBI" id="CHEBI:57970"/>
        <dbReference type="ChEBI" id="CHEBI:58342"/>
        <dbReference type="EC" id="2.3.1.15"/>
    </reaction>
</comment>
<comment type="pathway">
    <text evidence="1">Phospholipid metabolism; CDP-diacylglycerol biosynthesis; CDP-diacylglycerol from sn-glycerol 3-phosphate: step 1/3.</text>
</comment>
<comment type="subcellular location">
    <subcellularLocation>
        <location evidence="1">Cell inner membrane</location>
        <topology evidence="1">Peripheral membrane protein</topology>
        <orientation evidence="1">Cytoplasmic side</orientation>
    </subcellularLocation>
</comment>
<comment type="domain">
    <text evidence="1">The HXXXXD motif is essential for acyltransferase activity and may constitute the binding site for the phosphate moiety of the glycerol-3-phosphate.</text>
</comment>
<comment type="similarity">
    <text evidence="1">Belongs to the GPAT/DAPAT family.</text>
</comment>
<sequence length="824" mass="94242">MSSLLNFYRKVLNVPLSLLVKSRAIPTDPVKELNLNLEQPIIYVLPYTSQTDLLILQKNCLSLNLPDPLQNNELNGQSLPRYVFLDEGRRFFKSKGAKSETESIFYRYLDLHRNNESLDVQLIPASVLWGRSPGKESEPHLRLMSSFQRIISMIWFGRDNFVRFSQALSLKYMVAEHGADEGIAQKLARVAKIHFAKQRYSAMGPRLPDRQAMFNKIIQSPAIKAAIEEEAKTKKISIEKARQEAEKIVNEIAADVSHESLRIADRVLSWLWNKLYQGINVQNGDRVRKLALEGHEIVYVPCHRSHMDYLLLSYLLYHQGLVPPHIAAGINLNFFPAGPIFRSWGAFFIRRTFKGNRLYSTIFREYLAELFYRGYSVEYFIEGGRSRTGRLLEPKTGMMSMTLQALQRGLTRPISIVPVYIGYEHVLEVDTYAKELRGAEKEKENAGLVLRVIKKLKNLGQCYVNFAEPIQVNNYLNQHFPEWKESQAEDSRPKWLNEAVDSVAHQVMININKAAAINAKNLIGSVLLASRQRALAREQLIEQVDSYLQLFKNVSYSDDVIVPNDSAEEMLNHVLTLPRSGVISEKDSFGEMIRLDRESAVLMTYYRNNIQHLFVLPSLVASIILHHESVSKDLIIKTVNRIYPFLKAELFLHFEENDVRNQVEAILTEFSAQRIVKYESDVLQINRARVRALQLHAAGVREILQRYYISLSILLEHPEISRAALEKESRSIAQRLSILHGINAPEFFDKALFSTFSASLKAQGYFDSEGNCILEKAKEAEEILRSLISVEVQLTIQGAMEKVEEVENTETVVKTAEAVTEKNE</sequence>
<keyword id="KW-0012">Acyltransferase</keyword>
<keyword id="KW-0997">Cell inner membrane</keyword>
<keyword id="KW-1003">Cell membrane</keyword>
<keyword id="KW-0444">Lipid biosynthesis</keyword>
<keyword id="KW-0443">Lipid metabolism</keyword>
<keyword id="KW-0472">Membrane</keyword>
<keyword id="KW-0594">Phospholipid biosynthesis</keyword>
<keyword id="KW-1208">Phospholipid metabolism</keyword>
<keyword id="KW-0808">Transferase</keyword>
<feature type="chain" id="PRO_1000123072" description="Glycerol-3-phosphate acyltransferase">
    <location>
        <begin position="1"/>
        <end position="824"/>
    </location>
</feature>
<feature type="short sequence motif" description="HXXXXD motif">
    <location>
        <begin position="302"/>
        <end position="307"/>
    </location>
</feature>
<evidence type="ECO:0000255" key="1">
    <source>
        <dbReference type="HAMAP-Rule" id="MF_00393"/>
    </source>
</evidence>
<dbReference type="EC" id="2.3.1.15" evidence="1"/>
<dbReference type="EMBL" id="CP000687">
    <property type="protein sequence ID" value="ABY69682.1"/>
    <property type="molecule type" value="Genomic_DNA"/>
</dbReference>
<dbReference type="RefSeq" id="WP_005601572.1">
    <property type="nucleotide sequence ID" value="NC_010278.1"/>
</dbReference>
<dbReference type="SMR" id="B0BQ47"/>
<dbReference type="KEGG" id="apj:APJL_1126"/>
<dbReference type="HOGENOM" id="CLU_015407_0_0_6"/>
<dbReference type="UniPathway" id="UPA00557">
    <property type="reaction ID" value="UER00612"/>
</dbReference>
<dbReference type="Proteomes" id="UP000008547">
    <property type="component" value="Chromosome"/>
</dbReference>
<dbReference type="GO" id="GO:0005886">
    <property type="term" value="C:plasma membrane"/>
    <property type="evidence" value="ECO:0007669"/>
    <property type="project" value="UniProtKB-SubCell"/>
</dbReference>
<dbReference type="GO" id="GO:0004366">
    <property type="term" value="F:glycerol-3-phosphate O-acyltransferase activity"/>
    <property type="evidence" value="ECO:0007669"/>
    <property type="project" value="UniProtKB-UniRule"/>
</dbReference>
<dbReference type="GO" id="GO:0016024">
    <property type="term" value="P:CDP-diacylglycerol biosynthetic process"/>
    <property type="evidence" value="ECO:0007669"/>
    <property type="project" value="UniProtKB-UniRule"/>
</dbReference>
<dbReference type="GO" id="GO:0006631">
    <property type="term" value="P:fatty acid metabolic process"/>
    <property type="evidence" value="ECO:0007669"/>
    <property type="project" value="TreeGrafter"/>
</dbReference>
<dbReference type="CDD" id="cd07993">
    <property type="entry name" value="LPLAT_DHAPAT-like"/>
    <property type="match status" value="1"/>
</dbReference>
<dbReference type="HAMAP" id="MF_00393">
    <property type="entry name" value="Glyc3P_acyltrans"/>
    <property type="match status" value="1"/>
</dbReference>
<dbReference type="InterPro" id="IPR022284">
    <property type="entry name" value="GPAT/DHAPAT"/>
</dbReference>
<dbReference type="InterPro" id="IPR045520">
    <property type="entry name" value="GPAT/DHAPAT_C"/>
</dbReference>
<dbReference type="InterPro" id="IPR041728">
    <property type="entry name" value="GPAT/DHAPAT_LPLAT"/>
</dbReference>
<dbReference type="InterPro" id="IPR028354">
    <property type="entry name" value="GPAT_PlsB"/>
</dbReference>
<dbReference type="InterPro" id="IPR002123">
    <property type="entry name" value="Plipid/glycerol_acylTrfase"/>
</dbReference>
<dbReference type="NCBIfam" id="TIGR03703">
    <property type="entry name" value="plsB"/>
    <property type="match status" value="1"/>
</dbReference>
<dbReference type="NCBIfam" id="NF003441">
    <property type="entry name" value="PRK04974.1"/>
    <property type="match status" value="1"/>
</dbReference>
<dbReference type="PANTHER" id="PTHR12563:SF17">
    <property type="entry name" value="DIHYDROXYACETONE PHOSPHATE ACYLTRANSFERASE"/>
    <property type="match status" value="1"/>
</dbReference>
<dbReference type="PANTHER" id="PTHR12563">
    <property type="entry name" value="GLYCEROL-3-PHOSPHATE ACYLTRANSFERASE"/>
    <property type="match status" value="1"/>
</dbReference>
<dbReference type="Pfam" id="PF01553">
    <property type="entry name" value="Acyltransferase"/>
    <property type="match status" value="1"/>
</dbReference>
<dbReference type="Pfam" id="PF19277">
    <property type="entry name" value="GPAT_C"/>
    <property type="match status" value="1"/>
</dbReference>
<dbReference type="PIRSF" id="PIRSF500064">
    <property type="entry name" value="GPAT"/>
    <property type="match status" value="1"/>
</dbReference>
<dbReference type="PIRSF" id="PIRSF000437">
    <property type="entry name" value="GPAT_DHAPAT"/>
    <property type="match status" value="1"/>
</dbReference>
<dbReference type="SMART" id="SM00563">
    <property type="entry name" value="PlsC"/>
    <property type="match status" value="1"/>
</dbReference>
<dbReference type="SUPFAM" id="SSF69593">
    <property type="entry name" value="Glycerol-3-phosphate (1)-acyltransferase"/>
    <property type="match status" value="1"/>
</dbReference>
<accession>B0BQ47</accession>